<sequence>MAAVTVEEIRKAQRADGPATVLAIGTATPANYVTQADYPDYYFRITKSEHMTDLKEKFKRMCDKSMIRKRYMHLTEEILKENPNMCAYMAPSLDARQDIVVVEVPKLGKEAAAKAIKEWGQPKSKITHLIFCTTSGVDMPGCDYQLTKLLGLRPSVKRFMMYQQGCFAGGTVLRLAKDLAENNRGARVLVVCSEITAVTFRGPVDTHLDSLVGQALFGDGAAAVIVGADPDESIERPLYQLVSAAQTILPDSDGAIDGHLREVGLTFHLLKDVPGLISKNIEKSLKEAFGPIGISDWNSIFWIAHPGGPAILDQVEEKLELKEEKLRATRHVLSEYGNMSSACVLFILDEMRKKCAEEGMATTGEGLEWGVLFGFGPGLTVETVVLRSVPIKA</sequence>
<feature type="chain" id="PRO_0000216047" description="Chalcone synthase 3">
    <location>
        <begin position="1"/>
        <end position="393"/>
    </location>
</feature>
<feature type="active site" evidence="1">
    <location>
        <position position="166"/>
    </location>
</feature>
<evidence type="ECO:0000255" key="1">
    <source>
        <dbReference type="PROSITE-ProRule" id="PRU10023"/>
    </source>
</evidence>
<evidence type="ECO:0000305" key="2"/>
<protein>
    <recommendedName>
        <fullName>Chalcone synthase 3</fullName>
        <ecNumber>2.3.1.74</ecNumber>
    </recommendedName>
    <alternativeName>
        <fullName>Naringenin-chalcone synthase 3</fullName>
    </alternativeName>
</protein>
<accession>Q9FSB7</accession>
<proteinExistence type="evidence at transcript level"/>
<keyword id="KW-0012">Acyltransferase</keyword>
<keyword id="KW-0284">Flavonoid biosynthesis</keyword>
<keyword id="KW-0808">Transferase</keyword>
<gene>
    <name type="primary">CHS3</name>
</gene>
<dbReference type="EC" id="2.3.1.74"/>
<dbReference type="EMBL" id="AJ297791">
    <property type="protein sequence ID" value="CAC14061.2"/>
    <property type="molecule type" value="mRNA"/>
</dbReference>
<dbReference type="SMR" id="Q9FSB7"/>
<dbReference type="UniPathway" id="UPA00154"/>
<dbReference type="GO" id="GO:0016210">
    <property type="term" value="F:naringenin-chalcone synthase activity"/>
    <property type="evidence" value="ECO:0007669"/>
    <property type="project" value="UniProtKB-EC"/>
</dbReference>
<dbReference type="GO" id="GO:0009813">
    <property type="term" value="P:flavonoid biosynthetic process"/>
    <property type="evidence" value="ECO:0007669"/>
    <property type="project" value="UniProtKB-UniPathway"/>
</dbReference>
<dbReference type="GO" id="GO:0030639">
    <property type="term" value="P:polyketide biosynthetic process"/>
    <property type="evidence" value="ECO:0007669"/>
    <property type="project" value="TreeGrafter"/>
</dbReference>
<dbReference type="CDD" id="cd00831">
    <property type="entry name" value="CHS_like"/>
    <property type="match status" value="1"/>
</dbReference>
<dbReference type="FunFam" id="3.40.47.10:FF:000014">
    <property type="entry name" value="Chalcone synthase 1"/>
    <property type="match status" value="1"/>
</dbReference>
<dbReference type="FunFam" id="3.40.47.10:FF:000025">
    <property type="entry name" value="Chalcone synthase 2"/>
    <property type="match status" value="1"/>
</dbReference>
<dbReference type="Gene3D" id="3.40.47.10">
    <property type="match status" value="2"/>
</dbReference>
<dbReference type="InterPro" id="IPR012328">
    <property type="entry name" value="Chalcone/stilbene_synt_C"/>
</dbReference>
<dbReference type="InterPro" id="IPR001099">
    <property type="entry name" value="Chalcone/stilbene_synt_N"/>
</dbReference>
<dbReference type="InterPro" id="IPR018088">
    <property type="entry name" value="Chalcone/stilbene_synthase_AS"/>
</dbReference>
<dbReference type="InterPro" id="IPR011141">
    <property type="entry name" value="Polyketide_synthase_type-III"/>
</dbReference>
<dbReference type="InterPro" id="IPR016039">
    <property type="entry name" value="Thiolase-like"/>
</dbReference>
<dbReference type="PANTHER" id="PTHR11877:SF14">
    <property type="entry name" value="CHALCONE SYNTHASE"/>
    <property type="match status" value="1"/>
</dbReference>
<dbReference type="PANTHER" id="PTHR11877">
    <property type="entry name" value="HYDROXYMETHYLGLUTARYL-COA SYNTHASE"/>
    <property type="match status" value="1"/>
</dbReference>
<dbReference type="Pfam" id="PF02797">
    <property type="entry name" value="Chal_sti_synt_C"/>
    <property type="match status" value="1"/>
</dbReference>
<dbReference type="Pfam" id="PF00195">
    <property type="entry name" value="Chal_sti_synt_N"/>
    <property type="match status" value="1"/>
</dbReference>
<dbReference type="PIRSF" id="PIRSF000451">
    <property type="entry name" value="PKS_III"/>
    <property type="match status" value="1"/>
</dbReference>
<dbReference type="SUPFAM" id="SSF53901">
    <property type="entry name" value="Thiolase-like"/>
    <property type="match status" value="2"/>
</dbReference>
<dbReference type="PROSITE" id="PS00441">
    <property type="entry name" value="CHALCONE_SYNTH"/>
    <property type="match status" value="1"/>
</dbReference>
<comment type="function">
    <text>The primary product of this enzyme is 4,2',4',6'-tetrahydroxychalcone (also termed naringenin-chalcone or chalcone) which can under specific conditions spontaneously isomerize into naringenin.</text>
</comment>
<comment type="catalytic activity">
    <reaction evidence="1">
        <text>(E)-4-coumaroyl-CoA + 3 malonyl-CoA + 3 H(+) = 2',4,4',6'-tetrahydroxychalcone + 3 CO2 + 4 CoA</text>
        <dbReference type="Rhea" id="RHEA:11128"/>
        <dbReference type="ChEBI" id="CHEBI:15378"/>
        <dbReference type="ChEBI" id="CHEBI:15413"/>
        <dbReference type="ChEBI" id="CHEBI:16526"/>
        <dbReference type="ChEBI" id="CHEBI:57287"/>
        <dbReference type="ChEBI" id="CHEBI:57384"/>
        <dbReference type="ChEBI" id="CHEBI:85008"/>
        <dbReference type="EC" id="2.3.1.74"/>
    </reaction>
</comment>
<comment type="pathway">
    <text>Secondary metabolite biosynthesis; flavonoid biosynthesis.</text>
</comment>
<comment type="similarity">
    <text evidence="2">Belongs to the thiolase-like superfamily. Chalcone/stilbene synthases family.</text>
</comment>
<reference key="1">
    <citation type="journal article" date="2000" name="Eur. J. Biochem.">
        <title>Specificities of functionally expressed chalcone and acridone synthases from Ruta graveolens.</title>
        <authorList>
            <person name="Springob K."/>
            <person name="Lukacin R."/>
            <person name="Ernwein C."/>
            <person name="Groening I."/>
            <person name="Matern U."/>
        </authorList>
    </citation>
    <scope>NUCLEOTIDE SEQUENCE [MRNA]</scope>
    <source>
        <tissue>Immature flower</tissue>
    </source>
</reference>
<name>CHS3_RUTGR</name>
<organism>
    <name type="scientific">Ruta graveolens</name>
    <name type="common">Common rue</name>
    <dbReference type="NCBI Taxonomy" id="37565"/>
    <lineage>
        <taxon>Eukaryota</taxon>
        <taxon>Viridiplantae</taxon>
        <taxon>Streptophyta</taxon>
        <taxon>Embryophyta</taxon>
        <taxon>Tracheophyta</taxon>
        <taxon>Spermatophyta</taxon>
        <taxon>Magnoliopsida</taxon>
        <taxon>eudicotyledons</taxon>
        <taxon>Gunneridae</taxon>
        <taxon>Pentapetalae</taxon>
        <taxon>rosids</taxon>
        <taxon>malvids</taxon>
        <taxon>Sapindales</taxon>
        <taxon>Rutaceae</taxon>
        <taxon>Rutoideae</taxon>
        <taxon>Ruta</taxon>
    </lineage>
</organism>